<accession>Q9X1H5</accession>
<gene>
    <name evidence="1" type="primary">psuG</name>
    <name evidence="5" type="synonym">indA</name>
    <name type="ordered locus">TM_1464</name>
</gene>
<dbReference type="EC" id="4.2.1.70" evidence="1 3"/>
<dbReference type="EMBL" id="AE000512">
    <property type="protein sequence ID" value="AAD36532.1"/>
    <property type="molecule type" value="Genomic_DNA"/>
</dbReference>
<dbReference type="PIR" id="A72252">
    <property type="entry name" value="A72252"/>
</dbReference>
<dbReference type="RefSeq" id="NP_229264.1">
    <property type="nucleotide sequence ID" value="NC_000853.1"/>
</dbReference>
<dbReference type="RefSeq" id="WP_004081760.1">
    <property type="nucleotide sequence ID" value="NC_000853.1"/>
</dbReference>
<dbReference type="PDB" id="1VKM">
    <property type="method" value="X-ray"/>
    <property type="resolution" value="1.90 A"/>
    <property type="chains" value="A/B/C/D/E/F=1-285"/>
</dbReference>
<dbReference type="PDBsum" id="1VKM"/>
<dbReference type="SMR" id="Q9X1H5"/>
<dbReference type="STRING" id="243274.TM_1464"/>
<dbReference type="PaxDb" id="243274-THEMA_06990"/>
<dbReference type="EnsemblBacteria" id="AAD36532">
    <property type="protein sequence ID" value="AAD36532"/>
    <property type="gene ID" value="TM_1464"/>
</dbReference>
<dbReference type="KEGG" id="tma:TM1464"/>
<dbReference type="KEGG" id="tmi:THEMA_06990"/>
<dbReference type="KEGG" id="tmm:Tmari_1471"/>
<dbReference type="KEGG" id="tmw:THMA_1495"/>
<dbReference type="eggNOG" id="COG2313">
    <property type="taxonomic scope" value="Bacteria"/>
</dbReference>
<dbReference type="InParanoid" id="Q9X1H5"/>
<dbReference type="OrthoDB" id="9805870at2"/>
<dbReference type="EvolutionaryTrace" id="Q9X1H5"/>
<dbReference type="Proteomes" id="UP000008183">
    <property type="component" value="Chromosome"/>
</dbReference>
<dbReference type="GO" id="GO:0005737">
    <property type="term" value="C:cytoplasm"/>
    <property type="evidence" value="ECO:0000318"/>
    <property type="project" value="GO_Central"/>
</dbReference>
<dbReference type="GO" id="GO:0016798">
    <property type="term" value="F:hydrolase activity, acting on glycosyl bonds"/>
    <property type="evidence" value="ECO:0007669"/>
    <property type="project" value="UniProtKB-KW"/>
</dbReference>
<dbReference type="GO" id="GO:0046872">
    <property type="term" value="F:metal ion binding"/>
    <property type="evidence" value="ECO:0007669"/>
    <property type="project" value="UniProtKB-KW"/>
</dbReference>
<dbReference type="GO" id="GO:0004730">
    <property type="term" value="F:pseudouridylate synthase activity"/>
    <property type="evidence" value="ECO:0000318"/>
    <property type="project" value="GO_Central"/>
</dbReference>
<dbReference type="GO" id="GO:0046113">
    <property type="term" value="P:nucleobase catabolic process"/>
    <property type="evidence" value="ECO:0007669"/>
    <property type="project" value="UniProtKB-UniRule"/>
</dbReference>
<dbReference type="Gene3D" id="3.40.1790.10">
    <property type="entry name" value="Indigoidine synthase domain"/>
    <property type="match status" value="1"/>
</dbReference>
<dbReference type="HAMAP" id="MF_01876">
    <property type="entry name" value="PsiMP_glycosidase"/>
    <property type="match status" value="1"/>
</dbReference>
<dbReference type="InterPro" id="IPR022830">
    <property type="entry name" value="Indigdn_synthA-like"/>
</dbReference>
<dbReference type="InterPro" id="IPR007342">
    <property type="entry name" value="PsuG"/>
</dbReference>
<dbReference type="PANTHER" id="PTHR42909:SF1">
    <property type="entry name" value="CARBOHYDRATE KINASE PFKB DOMAIN-CONTAINING PROTEIN"/>
    <property type="match status" value="1"/>
</dbReference>
<dbReference type="PANTHER" id="PTHR42909">
    <property type="entry name" value="ZGC:136858"/>
    <property type="match status" value="1"/>
</dbReference>
<dbReference type="Pfam" id="PF04227">
    <property type="entry name" value="Indigoidine_A"/>
    <property type="match status" value="1"/>
</dbReference>
<dbReference type="SUPFAM" id="SSF110581">
    <property type="entry name" value="Indigoidine synthase A-like"/>
    <property type="match status" value="1"/>
</dbReference>
<sequence length="285" mass="31728">MIIESRIEKGKPVVGMETTVFVHGLPRKEAIELFRRAKEISREKGFQLAVIGILKGKIVAGMSEEELEAMMREGADKVGTREIPIVVAEGKNAATTVSATIFLSRRIGIEVVVTGGTGGVHPGRVDVSQDLTEMSSSRAVLVSSGIKSILDVEATFEMLETLEIPLVGFRTNEFPLFFSRKSGRRVPRIENVEEVLKIYESMKEMELEKTLMVLNPVPEEYEIPHDEIERLLEKIELEVEGKEVTPFLLKKLVEMTNGRTLKANLALLEENVKLAGEIAVKLKRS</sequence>
<organism>
    <name type="scientific">Thermotoga maritima (strain ATCC 43589 / DSM 3109 / JCM 10099 / NBRC 100826 / MSB8)</name>
    <dbReference type="NCBI Taxonomy" id="243274"/>
    <lineage>
        <taxon>Bacteria</taxon>
        <taxon>Thermotogati</taxon>
        <taxon>Thermotogota</taxon>
        <taxon>Thermotogae</taxon>
        <taxon>Thermotogales</taxon>
        <taxon>Thermotogaceae</taxon>
        <taxon>Thermotoga</taxon>
    </lineage>
</organism>
<keyword id="KW-0002">3D-structure</keyword>
<keyword id="KW-0326">Glycosidase</keyword>
<keyword id="KW-0378">Hydrolase</keyword>
<keyword id="KW-0456">Lyase</keyword>
<keyword id="KW-0464">Manganese</keyword>
<keyword id="KW-0479">Metal-binding</keyword>
<keyword id="KW-1185">Reference proteome</keyword>
<protein>
    <recommendedName>
        <fullName evidence="1 5">Pseudouridine-5'-phosphate glycosidase</fullName>
        <shortName evidence="1 5">PsiMP glycosidase</shortName>
        <ecNumber evidence="1 3">4.2.1.70</ecNumber>
    </recommendedName>
    <alternativeName>
        <fullName evidence="4">Indigoidine synthase A-like protein</fullName>
    </alternativeName>
</protein>
<feature type="chain" id="PRO_0000390555" description="Pseudouridine-5'-phosphate glycosidase">
    <location>
        <begin position="1"/>
        <end position="285"/>
    </location>
</feature>
<feature type="active site" description="Proton donor" evidence="1">
    <location>
        <position position="17"/>
    </location>
</feature>
<feature type="active site" description="Nucleophile" evidence="1">
    <location>
        <position position="147"/>
    </location>
</feature>
<feature type="binding site" evidence="1">
    <location>
        <position position="77"/>
    </location>
    <ligand>
        <name>substrate</name>
    </ligand>
</feature>
<feature type="binding site" evidence="1">
    <location>
        <position position="97"/>
    </location>
    <ligand>
        <name>substrate</name>
    </ligand>
</feature>
<feature type="binding site" evidence="1 2 6">
    <location>
        <position position="126"/>
    </location>
    <ligand>
        <name>Mn(2+)</name>
        <dbReference type="ChEBI" id="CHEBI:29035"/>
    </ligand>
</feature>
<feature type="binding site" evidence="1">
    <location>
        <begin position="128"/>
        <end position="130"/>
    </location>
    <ligand>
        <name>substrate</name>
    </ligand>
</feature>
<feature type="strand" evidence="7">
    <location>
        <begin position="3"/>
        <end position="5"/>
    </location>
</feature>
<feature type="strand" evidence="7">
    <location>
        <begin position="13"/>
        <end position="16"/>
    </location>
</feature>
<feature type="helix" evidence="7">
    <location>
        <begin position="19"/>
        <end position="22"/>
    </location>
</feature>
<feature type="helix" evidence="7">
    <location>
        <begin position="27"/>
        <end position="44"/>
    </location>
</feature>
<feature type="strand" evidence="7">
    <location>
        <begin position="47"/>
        <end position="54"/>
    </location>
</feature>
<feature type="strand" evidence="7">
    <location>
        <begin position="57"/>
        <end position="61"/>
    </location>
</feature>
<feature type="helix" evidence="7">
    <location>
        <begin position="64"/>
        <end position="73"/>
    </location>
</feature>
<feature type="strand" evidence="7">
    <location>
        <begin position="76"/>
        <end position="78"/>
    </location>
</feature>
<feature type="helix" evidence="7">
    <location>
        <begin position="80"/>
        <end position="82"/>
    </location>
</feature>
<feature type="helix" evidence="7">
    <location>
        <begin position="83"/>
        <end position="89"/>
    </location>
</feature>
<feature type="strand" evidence="7">
    <location>
        <begin position="93"/>
        <end position="95"/>
    </location>
</feature>
<feature type="helix" evidence="7">
    <location>
        <begin position="97"/>
        <end position="106"/>
    </location>
</feature>
<feature type="strand" evidence="7">
    <location>
        <begin position="111"/>
        <end position="113"/>
    </location>
</feature>
<feature type="helix" evidence="7">
    <location>
        <begin position="129"/>
        <end position="134"/>
    </location>
</feature>
<feature type="strand" evidence="7">
    <location>
        <begin position="139"/>
        <end position="146"/>
    </location>
</feature>
<feature type="helix" evidence="7">
    <location>
        <begin position="152"/>
        <end position="161"/>
    </location>
</feature>
<feature type="strand" evidence="7">
    <location>
        <begin position="166"/>
        <end position="170"/>
    </location>
</feature>
<feature type="helix" evidence="7">
    <location>
        <begin position="192"/>
        <end position="204"/>
    </location>
</feature>
<feature type="strand" evidence="7">
    <location>
        <begin position="209"/>
        <end position="214"/>
    </location>
</feature>
<feature type="helix" evidence="7">
    <location>
        <begin position="219"/>
        <end position="221"/>
    </location>
</feature>
<feature type="helix" evidence="7">
    <location>
        <begin position="225"/>
        <end position="233"/>
    </location>
</feature>
<feature type="helix" evidence="7">
    <location>
        <begin position="241"/>
        <end position="243"/>
    </location>
</feature>
<feature type="helix" evidence="7">
    <location>
        <begin position="244"/>
        <end position="255"/>
    </location>
</feature>
<feature type="turn" evidence="7">
    <location>
        <begin position="256"/>
        <end position="258"/>
    </location>
</feature>
<feature type="helix" evidence="7">
    <location>
        <begin position="259"/>
        <end position="282"/>
    </location>
</feature>
<proteinExistence type="evidence at protein level"/>
<name>PSUG_THEMA</name>
<comment type="function">
    <text evidence="1 3">Catalyzes the reversible cleavage of pseudouridine 5'-phosphate (PsiMP) to ribose 5-phosphate and uracil. Functions biologically in the cleavage direction, as part of a pseudouridine degradation pathway.</text>
</comment>
<comment type="catalytic activity">
    <reaction evidence="1 3">
        <text>D-ribose 5-phosphate + uracil = psi-UMP + H2O</text>
        <dbReference type="Rhea" id="RHEA:18337"/>
        <dbReference type="ChEBI" id="CHEBI:15377"/>
        <dbReference type="ChEBI" id="CHEBI:17568"/>
        <dbReference type="ChEBI" id="CHEBI:58380"/>
        <dbReference type="ChEBI" id="CHEBI:78346"/>
        <dbReference type="EC" id="4.2.1.70"/>
    </reaction>
</comment>
<comment type="cofactor">
    <cofactor evidence="1 2 5">
        <name>Mn(2+)</name>
        <dbReference type="ChEBI" id="CHEBI:29035"/>
    </cofactor>
    <text evidence="1 2 5">Binds 1 Mn(2+) ion per subunit.</text>
</comment>
<comment type="biophysicochemical properties">
    <temperatureDependence>
        <text evidence="3">No activity can be observed at or below 50 degrees Celsius.</text>
    </temperatureDependence>
</comment>
<comment type="subunit">
    <text evidence="1 2">Homotrimer.</text>
</comment>
<comment type="similarity">
    <text evidence="1">Belongs to the pseudouridine-5'-phosphate glycosidase family.</text>
</comment>
<reference key="1">
    <citation type="journal article" date="1999" name="Nature">
        <title>Evidence for lateral gene transfer between Archaea and Bacteria from genome sequence of Thermotoga maritima.</title>
        <authorList>
            <person name="Nelson K.E."/>
            <person name="Clayton R.A."/>
            <person name="Gill S.R."/>
            <person name="Gwinn M.L."/>
            <person name="Dodson R.J."/>
            <person name="Haft D.H."/>
            <person name="Hickey E.K."/>
            <person name="Peterson J.D."/>
            <person name="Nelson W.C."/>
            <person name="Ketchum K.A."/>
            <person name="McDonald L.A."/>
            <person name="Utterback T.R."/>
            <person name="Malek J.A."/>
            <person name="Linher K.D."/>
            <person name="Garrett M.M."/>
            <person name="Stewart A.M."/>
            <person name="Cotton M.D."/>
            <person name="Pratt M.S."/>
            <person name="Phillips C.A."/>
            <person name="Richardson D.L."/>
            <person name="Heidelberg J.F."/>
            <person name="Sutton G.G."/>
            <person name="Fleischmann R.D."/>
            <person name="Eisen J.A."/>
            <person name="White O."/>
            <person name="Salzberg S.L."/>
            <person name="Smith H.O."/>
            <person name="Venter J.C."/>
            <person name="Fraser C.M."/>
        </authorList>
    </citation>
    <scope>NUCLEOTIDE SEQUENCE [LARGE SCALE GENOMIC DNA]</scope>
    <source>
        <strain>ATCC 43589 / DSM 3109 / JCM 10099 / NBRC 100826 / MSB8</strain>
    </source>
</reference>
<reference key="2">
    <citation type="journal article" date="2008" name="J. Biol. Chem.">
        <title>Molecular identification of pseudouridine-metabolizing enzymes.</title>
        <authorList>
            <person name="Preumont A."/>
            <person name="Snoussi K."/>
            <person name="Stroobant V."/>
            <person name="Collet J.-F."/>
            <person name="Van Schaftingen E."/>
        </authorList>
    </citation>
    <scope>FUNCTION</scope>
    <scope>CATALYTIC ACTIVITY</scope>
    <scope>COFACTOR</scope>
    <scope>BIOPHYSICOCHEMICAL PROPERTIES</scope>
</reference>
<reference evidence="6" key="3">
    <citation type="journal article" date="2005" name="Proteins">
        <title>Crystal structure of an indigoidine synthase A (IndA)-like protein (TM1464) from Thermotoga maritima at 1.90 A resolution reveals a new fold.</title>
        <authorList>
            <person name="Levin I."/>
            <person name="Miller M.D."/>
            <person name="Schwarzenbacher R."/>
            <person name="McMullan D."/>
            <person name="Abdubek P."/>
            <person name="Ambing E."/>
            <person name="Biorac T."/>
            <person name="Cambell J."/>
            <person name="Canaves J.M."/>
            <person name="Chiu H.-J."/>
            <person name="Deacon A.M."/>
            <person name="DiDonato M."/>
            <person name="Elsliger M.-A."/>
            <person name="Godzik A."/>
            <person name="Grittini C."/>
            <person name="Grzechnik S.K."/>
            <person name="Hale J."/>
            <person name="Hampton E."/>
            <person name="Han G.W."/>
            <person name="Haugen J."/>
            <person name="Hornsby M."/>
            <person name="Jaroszewski L."/>
            <person name="Karlak C."/>
            <person name="Klock H.E."/>
            <person name="Koesema E."/>
            <person name="Kreusch A."/>
            <person name="Kuhn P."/>
            <person name="Lesley S.A."/>
            <person name="Morse A."/>
            <person name="Moy K."/>
            <person name="Nigoghossian E."/>
            <person name="Ouyang J."/>
            <person name="Page R."/>
            <person name="Quijano K."/>
            <person name="Reyes R."/>
            <person name="Robb A."/>
            <person name="Sims E."/>
            <person name="Spraggon G."/>
            <person name="Stevens R.C."/>
            <person name="van den Bedem H."/>
            <person name="Velasquez J."/>
            <person name="Vincent J."/>
            <person name="Wang X."/>
            <person name="West B."/>
            <person name="Wolf G."/>
            <person name="Xu Q."/>
            <person name="Zagnitko O."/>
            <person name="Hodgson K.O."/>
            <person name="Wooley J."/>
            <person name="Wilson I.A."/>
        </authorList>
    </citation>
    <scope>X-RAY CRYSTALLOGRAPHY (1.9 ANGSTROMS) IN COMPLEX WITH MANGANESE</scope>
    <scope>SUBUNIT</scope>
</reference>
<evidence type="ECO:0000255" key="1">
    <source>
        <dbReference type="HAMAP-Rule" id="MF_01876"/>
    </source>
</evidence>
<evidence type="ECO:0000269" key="2">
    <source>
    </source>
</evidence>
<evidence type="ECO:0000269" key="3">
    <source>
    </source>
</evidence>
<evidence type="ECO:0000303" key="4">
    <source>
    </source>
</evidence>
<evidence type="ECO:0000303" key="5">
    <source>
    </source>
</evidence>
<evidence type="ECO:0007744" key="6">
    <source>
        <dbReference type="PDB" id="1VKM"/>
    </source>
</evidence>
<evidence type="ECO:0007829" key="7">
    <source>
        <dbReference type="PDB" id="1VKM"/>
    </source>
</evidence>